<comment type="function">
    <text evidence="1">Digests double-stranded RNA. Involved in the processing of primary rRNA transcript to yield the immediate precursors to the large and small rRNAs (23S and 16S). Processes some mRNAs, and tRNAs when they are encoded in the rRNA operon. Processes pre-crRNA and tracrRNA of type II CRISPR loci if present in the organism.</text>
</comment>
<comment type="catalytic activity">
    <reaction evidence="1">
        <text>Endonucleolytic cleavage to 5'-phosphomonoester.</text>
        <dbReference type="EC" id="3.1.26.3"/>
    </reaction>
</comment>
<comment type="cofactor">
    <cofactor evidence="1">
        <name>Mg(2+)</name>
        <dbReference type="ChEBI" id="CHEBI:18420"/>
    </cofactor>
</comment>
<comment type="subunit">
    <text evidence="1">Homodimer.</text>
</comment>
<comment type="subcellular location">
    <subcellularLocation>
        <location evidence="1">Cytoplasm</location>
    </subcellularLocation>
</comment>
<comment type="similarity">
    <text evidence="1">Belongs to the ribonuclease III family.</text>
</comment>
<accession>A6GW45</accession>
<proteinExistence type="inferred from homology"/>
<gene>
    <name evidence="1" type="primary">rnc</name>
    <name type="ordered locus">FP0202</name>
</gene>
<organism>
    <name type="scientific">Flavobacterium psychrophilum (strain ATCC 49511 / DSM 21280 / CIP 103535 / JIP02/86)</name>
    <dbReference type="NCBI Taxonomy" id="402612"/>
    <lineage>
        <taxon>Bacteria</taxon>
        <taxon>Pseudomonadati</taxon>
        <taxon>Bacteroidota</taxon>
        <taxon>Flavobacteriia</taxon>
        <taxon>Flavobacteriales</taxon>
        <taxon>Flavobacteriaceae</taxon>
        <taxon>Flavobacterium</taxon>
    </lineage>
</organism>
<keyword id="KW-0963">Cytoplasm</keyword>
<keyword id="KW-0255">Endonuclease</keyword>
<keyword id="KW-0378">Hydrolase</keyword>
<keyword id="KW-0460">Magnesium</keyword>
<keyword id="KW-0479">Metal-binding</keyword>
<keyword id="KW-0507">mRNA processing</keyword>
<keyword id="KW-0540">Nuclease</keyword>
<keyword id="KW-1185">Reference proteome</keyword>
<keyword id="KW-0694">RNA-binding</keyword>
<keyword id="KW-0698">rRNA processing</keyword>
<keyword id="KW-0699">rRNA-binding</keyword>
<keyword id="KW-0819">tRNA processing</keyword>
<sequence>MSFIKKIFLSSRSSEDGLFFSKLEKILGFKPLNLTHFRRAFTHRSMNKLDEKGNPMNYERLEFMGDAMLGSVIAAHLFNMSPTGDEGYLTKMRSKIVSREHLNELGKDLNLIQFLESKVTLQNFGENIHGNLFEAFVGAIYLDRGFVYCEKFIHKKVIKPYVDIDKLEGKVISYKSLLIEWCQKEKRVFHYDIYEDEDAGKLKYFGVKLSIDGKVVAKARATSKKKAEEIASKRGYFVFQSEIDGK</sequence>
<evidence type="ECO:0000255" key="1">
    <source>
        <dbReference type="HAMAP-Rule" id="MF_00104"/>
    </source>
</evidence>
<name>RNC_FLAPJ</name>
<feature type="chain" id="PRO_0000416604" description="Ribonuclease 3">
    <location>
        <begin position="1"/>
        <end position="246"/>
    </location>
</feature>
<feature type="domain" description="RNase III" evidence="1">
    <location>
        <begin position="20"/>
        <end position="145"/>
    </location>
</feature>
<feature type="domain" description="DRBM" evidence="1">
    <location>
        <begin position="173"/>
        <end position="241"/>
    </location>
</feature>
<feature type="active site" evidence="1">
    <location>
        <position position="66"/>
    </location>
</feature>
<feature type="active site" evidence="1">
    <location>
        <position position="134"/>
    </location>
</feature>
<feature type="binding site" evidence="1">
    <location>
        <position position="62"/>
    </location>
    <ligand>
        <name>Mg(2+)</name>
        <dbReference type="ChEBI" id="CHEBI:18420"/>
    </ligand>
</feature>
<feature type="binding site" evidence="1">
    <location>
        <position position="131"/>
    </location>
    <ligand>
        <name>Mg(2+)</name>
        <dbReference type="ChEBI" id="CHEBI:18420"/>
    </ligand>
</feature>
<feature type="binding site" evidence="1">
    <location>
        <position position="134"/>
    </location>
    <ligand>
        <name>Mg(2+)</name>
        <dbReference type="ChEBI" id="CHEBI:18420"/>
    </ligand>
</feature>
<protein>
    <recommendedName>
        <fullName evidence="1">Ribonuclease 3</fullName>
        <ecNumber evidence="1">3.1.26.3</ecNumber>
    </recommendedName>
    <alternativeName>
        <fullName evidence="1">Ribonuclease III</fullName>
        <shortName evidence="1">RNase III</shortName>
    </alternativeName>
</protein>
<reference key="1">
    <citation type="journal article" date="2007" name="Nat. Biotechnol.">
        <title>Complete genome sequence of the fish pathogen Flavobacterium psychrophilum.</title>
        <authorList>
            <person name="Duchaud E."/>
            <person name="Boussaha M."/>
            <person name="Loux V."/>
            <person name="Bernardet J.-F."/>
            <person name="Michel C."/>
            <person name="Kerouault B."/>
            <person name="Mondot S."/>
            <person name="Nicolas P."/>
            <person name="Bossy R."/>
            <person name="Caron C."/>
            <person name="Bessieres P."/>
            <person name="Gibrat J.-F."/>
            <person name="Claverol S."/>
            <person name="Dumetz F."/>
            <person name="Le Henaff M."/>
            <person name="Benmansour A."/>
        </authorList>
    </citation>
    <scope>NUCLEOTIDE SEQUENCE [LARGE SCALE GENOMIC DNA]</scope>
    <source>
        <strain>ATCC 49511 / DSM 21280 / CIP 103535 / JIP02/86</strain>
    </source>
</reference>
<dbReference type="EC" id="3.1.26.3" evidence="1"/>
<dbReference type="EMBL" id="AM398681">
    <property type="protein sequence ID" value="CAL42318.1"/>
    <property type="molecule type" value="Genomic_DNA"/>
</dbReference>
<dbReference type="RefSeq" id="WP_011962378.1">
    <property type="nucleotide sequence ID" value="NC_009613.3"/>
</dbReference>
<dbReference type="RefSeq" id="YP_001295138.1">
    <property type="nucleotide sequence ID" value="NC_009613.3"/>
</dbReference>
<dbReference type="SMR" id="A6GW45"/>
<dbReference type="STRING" id="402612.FP0202"/>
<dbReference type="EnsemblBacteria" id="CAL42318">
    <property type="protein sequence ID" value="CAL42318"/>
    <property type="gene ID" value="FP0202"/>
</dbReference>
<dbReference type="GeneID" id="66553830"/>
<dbReference type="KEGG" id="fps:FP0202"/>
<dbReference type="PATRIC" id="fig|402612.5.peg.211"/>
<dbReference type="eggNOG" id="COG0571">
    <property type="taxonomic scope" value="Bacteria"/>
</dbReference>
<dbReference type="HOGENOM" id="CLU_000907_1_0_10"/>
<dbReference type="OrthoDB" id="9805026at2"/>
<dbReference type="Proteomes" id="UP000006394">
    <property type="component" value="Chromosome"/>
</dbReference>
<dbReference type="GO" id="GO:0005737">
    <property type="term" value="C:cytoplasm"/>
    <property type="evidence" value="ECO:0007669"/>
    <property type="project" value="UniProtKB-SubCell"/>
</dbReference>
<dbReference type="GO" id="GO:0003725">
    <property type="term" value="F:double-stranded RNA binding"/>
    <property type="evidence" value="ECO:0007669"/>
    <property type="project" value="TreeGrafter"/>
</dbReference>
<dbReference type="GO" id="GO:0046872">
    <property type="term" value="F:metal ion binding"/>
    <property type="evidence" value="ECO:0007669"/>
    <property type="project" value="UniProtKB-KW"/>
</dbReference>
<dbReference type="GO" id="GO:0004525">
    <property type="term" value="F:ribonuclease III activity"/>
    <property type="evidence" value="ECO:0007669"/>
    <property type="project" value="UniProtKB-UniRule"/>
</dbReference>
<dbReference type="GO" id="GO:0019843">
    <property type="term" value="F:rRNA binding"/>
    <property type="evidence" value="ECO:0007669"/>
    <property type="project" value="UniProtKB-KW"/>
</dbReference>
<dbReference type="GO" id="GO:0006397">
    <property type="term" value="P:mRNA processing"/>
    <property type="evidence" value="ECO:0007669"/>
    <property type="project" value="UniProtKB-UniRule"/>
</dbReference>
<dbReference type="GO" id="GO:0010468">
    <property type="term" value="P:regulation of gene expression"/>
    <property type="evidence" value="ECO:0007669"/>
    <property type="project" value="TreeGrafter"/>
</dbReference>
<dbReference type="GO" id="GO:0006364">
    <property type="term" value="P:rRNA processing"/>
    <property type="evidence" value="ECO:0007669"/>
    <property type="project" value="UniProtKB-UniRule"/>
</dbReference>
<dbReference type="GO" id="GO:0008033">
    <property type="term" value="P:tRNA processing"/>
    <property type="evidence" value="ECO:0007669"/>
    <property type="project" value="UniProtKB-KW"/>
</dbReference>
<dbReference type="CDD" id="cd00593">
    <property type="entry name" value="RIBOc"/>
    <property type="match status" value="1"/>
</dbReference>
<dbReference type="Gene3D" id="3.30.160.20">
    <property type="match status" value="1"/>
</dbReference>
<dbReference type="Gene3D" id="1.10.1520.10">
    <property type="entry name" value="Ribonuclease III domain"/>
    <property type="match status" value="1"/>
</dbReference>
<dbReference type="HAMAP" id="MF_00104">
    <property type="entry name" value="RNase_III"/>
    <property type="match status" value="1"/>
</dbReference>
<dbReference type="InterPro" id="IPR014720">
    <property type="entry name" value="dsRBD_dom"/>
</dbReference>
<dbReference type="InterPro" id="IPR011907">
    <property type="entry name" value="RNase_III"/>
</dbReference>
<dbReference type="InterPro" id="IPR000999">
    <property type="entry name" value="RNase_III_dom"/>
</dbReference>
<dbReference type="InterPro" id="IPR036389">
    <property type="entry name" value="RNase_III_sf"/>
</dbReference>
<dbReference type="NCBIfam" id="TIGR02191">
    <property type="entry name" value="RNaseIII"/>
    <property type="match status" value="1"/>
</dbReference>
<dbReference type="PANTHER" id="PTHR11207:SF0">
    <property type="entry name" value="RIBONUCLEASE 3"/>
    <property type="match status" value="1"/>
</dbReference>
<dbReference type="PANTHER" id="PTHR11207">
    <property type="entry name" value="RIBONUCLEASE III"/>
    <property type="match status" value="1"/>
</dbReference>
<dbReference type="Pfam" id="PF00035">
    <property type="entry name" value="dsrm"/>
    <property type="match status" value="1"/>
</dbReference>
<dbReference type="Pfam" id="PF14622">
    <property type="entry name" value="Ribonucleas_3_3"/>
    <property type="match status" value="1"/>
</dbReference>
<dbReference type="SMART" id="SM00358">
    <property type="entry name" value="DSRM"/>
    <property type="match status" value="1"/>
</dbReference>
<dbReference type="SMART" id="SM00535">
    <property type="entry name" value="RIBOc"/>
    <property type="match status" value="1"/>
</dbReference>
<dbReference type="SUPFAM" id="SSF54768">
    <property type="entry name" value="dsRNA-binding domain-like"/>
    <property type="match status" value="1"/>
</dbReference>
<dbReference type="SUPFAM" id="SSF69065">
    <property type="entry name" value="RNase III domain-like"/>
    <property type="match status" value="1"/>
</dbReference>
<dbReference type="PROSITE" id="PS50137">
    <property type="entry name" value="DS_RBD"/>
    <property type="match status" value="1"/>
</dbReference>
<dbReference type="PROSITE" id="PS50142">
    <property type="entry name" value="RNASE_3_2"/>
    <property type="match status" value="1"/>
</dbReference>